<feature type="chain" id="PRO_0000107728" description="Nucleotide-binding protein MCA0739">
    <location>
        <begin position="1"/>
        <end position="295"/>
    </location>
</feature>
<feature type="binding site" evidence="1">
    <location>
        <begin position="8"/>
        <end position="15"/>
    </location>
    <ligand>
        <name>ATP</name>
        <dbReference type="ChEBI" id="CHEBI:30616"/>
    </ligand>
</feature>
<feature type="binding site" evidence="1">
    <location>
        <begin position="60"/>
        <end position="63"/>
    </location>
    <ligand>
        <name>GTP</name>
        <dbReference type="ChEBI" id="CHEBI:37565"/>
    </ligand>
</feature>
<reference key="1">
    <citation type="journal article" date="2004" name="PLoS Biol.">
        <title>Genomic insights into methanotrophy: the complete genome sequence of Methylococcus capsulatus (Bath).</title>
        <authorList>
            <person name="Ward N.L."/>
            <person name="Larsen O."/>
            <person name="Sakwa J."/>
            <person name="Bruseth L."/>
            <person name="Khouri H.M."/>
            <person name="Durkin A.S."/>
            <person name="Dimitrov G."/>
            <person name="Jiang L."/>
            <person name="Scanlan D."/>
            <person name="Kang K.H."/>
            <person name="Lewis M.R."/>
            <person name="Nelson K.E."/>
            <person name="Methe B.A."/>
            <person name="Wu M."/>
            <person name="Heidelberg J.F."/>
            <person name="Paulsen I.T."/>
            <person name="Fouts D.E."/>
            <person name="Ravel J."/>
            <person name="Tettelin H."/>
            <person name="Ren Q."/>
            <person name="Read T.D."/>
            <person name="DeBoy R.T."/>
            <person name="Seshadri R."/>
            <person name="Salzberg S.L."/>
            <person name="Jensen H.B."/>
            <person name="Birkeland N.K."/>
            <person name="Nelson W.C."/>
            <person name="Dodson R.J."/>
            <person name="Grindhaug S.H."/>
            <person name="Holt I.E."/>
            <person name="Eidhammer I."/>
            <person name="Jonasen I."/>
            <person name="Vanaken S."/>
            <person name="Utterback T.R."/>
            <person name="Feldblyum T.V."/>
            <person name="Fraser C.M."/>
            <person name="Lillehaug J.R."/>
            <person name="Eisen J.A."/>
        </authorList>
    </citation>
    <scope>NUCLEOTIDE SEQUENCE [LARGE SCALE GENOMIC DNA]</scope>
    <source>
        <strain>ATCC 33009 / NCIMB 11132 / Bath</strain>
    </source>
</reference>
<protein>
    <recommendedName>
        <fullName evidence="1">Nucleotide-binding protein MCA0739</fullName>
    </recommendedName>
</protein>
<accession>Q60AV5</accession>
<sequence>MRLIIVSGFSGSGKSIALDTLEDCGYYCIDNLPAPLIEPFLQQAIASRSSAFDKIAIGIDARNQSANLTGFPDILGRARQLGVDCRILFLQAEPETLLKRFSETRRKHPLTDASVPLAEAIELERHLLEPVLSRADLHIDTTYTTIHQLRELVRQRVGIPSGGLMSLCLQSFGFKHGVPMDTDFVFDARCLPNPHWTASLRPKTGKDPEVVAFLAESADVHDYLNHLTAFLERWIPCFLAENRSYLNVSIGCTGGQHRSVYLVEALAGRLNSDRYNLLVRHRELPEPAEESHGTK</sequence>
<evidence type="ECO:0000255" key="1">
    <source>
        <dbReference type="HAMAP-Rule" id="MF_00636"/>
    </source>
</evidence>
<comment type="function">
    <text evidence="1">Displays ATPase and GTPase activities.</text>
</comment>
<comment type="similarity">
    <text evidence="1">Belongs to the RapZ-like family.</text>
</comment>
<keyword id="KW-0067">ATP-binding</keyword>
<keyword id="KW-0342">GTP-binding</keyword>
<keyword id="KW-0547">Nucleotide-binding</keyword>
<keyword id="KW-1185">Reference proteome</keyword>
<gene>
    <name type="ordered locus">MCA0739</name>
</gene>
<organism>
    <name type="scientific">Methylococcus capsulatus (strain ATCC 33009 / NCIMB 11132 / Bath)</name>
    <dbReference type="NCBI Taxonomy" id="243233"/>
    <lineage>
        <taxon>Bacteria</taxon>
        <taxon>Pseudomonadati</taxon>
        <taxon>Pseudomonadota</taxon>
        <taxon>Gammaproteobacteria</taxon>
        <taxon>Methylococcales</taxon>
        <taxon>Methylococcaceae</taxon>
        <taxon>Methylococcus</taxon>
    </lineage>
</organism>
<dbReference type="EMBL" id="AE017282">
    <property type="protein sequence ID" value="AAU93107.1"/>
    <property type="molecule type" value="Genomic_DNA"/>
</dbReference>
<dbReference type="SMR" id="Q60AV5"/>
<dbReference type="STRING" id="243233.MCA0739"/>
<dbReference type="GeneID" id="88223051"/>
<dbReference type="KEGG" id="mca:MCA0739"/>
<dbReference type="eggNOG" id="COG1660">
    <property type="taxonomic scope" value="Bacteria"/>
</dbReference>
<dbReference type="HOGENOM" id="CLU_059558_1_1_6"/>
<dbReference type="Proteomes" id="UP000006821">
    <property type="component" value="Chromosome"/>
</dbReference>
<dbReference type="GO" id="GO:0005524">
    <property type="term" value="F:ATP binding"/>
    <property type="evidence" value="ECO:0007669"/>
    <property type="project" value="UniProtKB-UniRule"/>
</dbReference>
<dbReference type="GO" id="GO:0005525">
    <property type="term" value="F:GTP binding"/>
    <property type="evidence" value="ECO:0007669"/>
    <property type="project" value="UniProtKB-UniRule"/>
</dbReference>
<dbReference type="Gene3D" id="3.40.50.300">
    <property type="entry name" value="P-loop containing nucleotide triphosphate hydrolases"/>
    <property type="match status" value="1"/>
</dbReference>
<dbReference type="HAMAP" id="MF_00636">
    <property type="entry name" value="RapZ_like"/>
    <property type="match status" value="1"/>
</dbReference>
<dbReference type="InterPro" id="IPR027417">
    <property type="entry name" value="P-loop_NTPase"/>
</dbReference>
<dbReference type="InterPro" id="IPR005337">
    <property type="entry name" value="RapZ-like"/>
</dbReference>
<dbReference type="InterPro" id="IPR053930">
    <property type="entry name" value="RapZ-like_N"/>
</dbReference>
<dbReference type="InterPro" id="IPR053931">
    <property type="entry name" value="RapZ_C"/>
</dbReference>
<dbReference type="NCBIfam" id="NF003828">
    <property type="entry name" value="PRK05416.1"/>
    <property type="match status" value="1"/>
</dbReference>
<dbReference type="PANTHER" id="PTHR30448">
    <property type="entry name" value="RNASE ADAPTER PROTEIN RAPZ"/>
    <property type="match status" value="1"/>
</dbReference>
<dbReference type="PANTHER" id="PTHR30448:SF0">
    <property type="entry name" value="RNASE ADAPTER PROTEIN RAPZ"/>
    <property type="match status" value="1"/>
</dbReference>
<dbReference type="Pfam" id="PF22740">
    <property type="entry name" value="PapZ_C"/>
    <property type="match status" value="1"/>
</dbReference>
<dbReference type="Pfam" id="PF03668">
    <property type="entry name" value="RapZ-like_N"/>
    <property type="match status" value="1"/>
</dbReference>
<dbReference type="PIRSF" id="PIRSF005052">
    <property type="entry name" value="P-loopkin"/>
    <property type="match status" value="1"/>
</dbReference>
<dbReference type="SUPFAM" id="SSF52540">
    <property type="entry name" value="P-loop containing nucleoside triphosphate hydrolases"/>
    <property type="match status" value="1"/>
</dbReference>
<name>Y739_METCA</name>
<proteinExistence type="inferred from homology"/>